<keyword id="KW-1185">Reference proteome</keyword>
<keyword id="KW-0687">Ribonucleoprotein</keyword>
<keyword id="KW-0689">Ribosomal protein</keyword>
<keyword id="KW-0694">RNA-binding</keyword>
<keyword id="KW-0699">rRNA-binding</keyword>
<keyword id="KW-0820">tRNA-binding</keyword>
<reference key="1">
    <citation type="journal article" date="2000" name="Antimicrob. Agents Chemother.">
        <title>Mutations in ribosomal protein L16 conferring reduced susceptibility to evernimicin (SCH27899): implications for mechanism of action.</title>
        <authorList>
            <person name="Adrian P.V."/>
            <person name="Zhao W."/>
            <person name="Black T.A."/>
            <person name="Shaw K.J."/>
            <person name="Hare R.S."/>
            <person name="Klugman K.P."/>
        </authorList>
    </citation>
    <scope>NUCLEOTIDE SEQUENCE [GENOMIC DNA]</scope>
</reference>
<reference key="2">
    <citation type="journal article" date="2001" name="J. Bacteriol.">
        <title>Genome of the bacterium Streptococcus pneumoniae strain R6.</title>
        <authorList>
            <person name="Hoskins J."/>
            <person name="Alborn W.E. Jr."/>
            <person name="Arnold J."/>
            <person name="Blaszczak L.C."/>
            <person name="Burgett S."/>
            <person name="DeHoff B.S."/>
            <person name="Estrem S.T."/>
            <person name="Fritz L."/>
            <person name="Fu D.-J."/>
            <person name="Fuller W."/>
            <person name="Geringer C."/>
            <person name="Gilmour R."/>
            <person name="Glass J.S."/>
            <person name="Khoja H."/>
            <person name="Kraft A.R."/>
            <person name="Lagace R.E."/>
            <person name="LeBlanc D.J."/>
            <person name="Lee L.N."/>
            <person name="Lefkowitz E.J."/>
            <person name="Lu J."/>
            <person name="Matsushima P."/>
            <person name="McAhren S.M."/>
            <person name="McHenney M."/>
            <person name="McLeaster K."/>
            <person name="Mundy C.W."/>
            <person name="Nicas T.I."/>
            <person name="Norris F.H."/>
            <person name="O'Gara M."/>
            <person name="Peery R.B."/>
            <person name="Robertson G.T."/>
            <person name="Rockey P."/>
            <person name="Sun P.-M."/>
            <person name="Winkler M.E."/>
            <person name="Yang Y."/>
            <person name="Young-Bellido M."/>
            <person name="Zhao G."/>
            <person name="Zook C.A."/>
            <person name="Baltz R.H."/>
            <person name="Jaskunas S.R."/>
            <person name="Rosteck P.R. Jr."/>
            <person name="Skatrud P.L."/>
            <person name="Glass J.I."/>
        </authorList>
    </citation>
    <scope>NUCLEOTIDE SEQUENCE [LARGE SCALE GENOMIC DNA]</scope>
    <source>
        <strain>ATCC BAA-255 / R6</strain>
    </source>
</reference>
<protein>
    <recommendedName>
        <fullName evidence="1">Large ribosomal subunit protein uL16</fullName>
    </recommendedName>
    <alternativeName>
        <fullName evidence="2">50S ribosomal protein L16</fullName>
    </alternativeName>
</protein>
<organism>
    <name type="scientific">Streptococcus pneumoniae (strain ATCC BAA-255 / R6)</name>
    <dbReference type="NCBI Taxonomy" id="171101"/>
    <lineage>
        <taxon>Bacteria</taxon>
        <taxon>Bacillati</taxon>
        <taxon>Bacillota</taxon>
        <taxon>Bacilli</taxon>
        <taxon>Lactobacillales</taxon>
        <taxon>Streptococcaceae</taxon>
        <taxon>Streptococcus</taxon>
    </lineage>
</organism>
<gene>
    <name evidence="1" type="primary">rplP</name>
    <name type="ordered locus">spr0196</name>
</gene>
<evidence type="ECO:0000255" key="1">
    <source>
        <dbReference type="HAMAP-Rule" id="MF_01342"/>
    </source>
</evidence>
<evidence type="ECO:0000305" key="2"/>
<dbReference type="EMBL" id="AF126059">
    <property type="protein sequence ID" value="AAD33263.1"/>
    <property type="molecule type" value="Genomic_DNA"/>
</dbReference>
<dbReference type="EMBL" id="AE007317">
    <property type="protein sequence ID" value="AAK99000.1"/>
    <property type="molecule type" value="Genomic_DNA"/>
</dbReference>
<dbReference type="PIR" id="D97896">
    <property type="entry name" value="D97896"/>
</dbReference>
<dbReference type="RefSeq" id="NP_357790.1">
    <property type="nucleotide sequence ID" value="NC_003098.1"/>
</dbReference>
<dbReference type="RefSeq" id="WP_000960946.1">
    <property type="nucleotide sequence ID" value="NC_003098.1"/>
</dbReference>
<dbReference type="SMR" id="P0A476"/>
<dbReference type="STRING" id="171101.spr0196"/>
<dbReference type="GeneID" id="93738964"/>
<dbReference type="KEGG" id="spr:spr0196"/>
<dbReference type="PATRIC" id="fig|171101.6.peg.227"/>
<dbReference type="eggNOG" id="COG0197">
    <property type="taxonomic scope" value="Bacteria"/>
</dbReference>
<dbReference type="HOGENOM" id="CLU_078858_2_1_9"/>
<dbReference type="PRO" id="PR:P0A476"/>
<dbReference type="Proteomes" id="UP000000586">
    <property type="component" value="Chromosome"/>
</dbReference>
<dbReference type="GO" id="GO:0022625">
    <property type="term" value="C:cytosolic large ribosomal subunit"/>
    <property type="evidence" value="ECO:0000318"/>
    <property type="project" value="GO_Central"/>
</dbReference>
<dbReference type="GO" id="GO:0019843">
    <property type="term" value="F:rRNA binding"/>
    <property type="evidence" value="ECO:0000318"/>
    <property type="project" value="GO_Central"/>
</dbReference>
<dbReference type="GO" id="GO:0003735">
    <property type="term" value="F:structural constituent of ribosome"/>
    <property type="evidence" value="ECO:0000318"/>
    <property type="project" value="GO_Central"/>
</dbReference>
<dbReference type="GO" id="GO:0000049">
    <property type="term" value="F:tRNA binding"/>
    <property type="evidence" value="ECO:0007669"/>
    <property type="project" value="UniProtKB-KW"/>
</dbReference>
<dbReference type="GO" id="GO:0006412">
    <property type="term" value="P:translation"/>
    <property type="evidence" value="ECO:0007669"/>
    <property type="project" value="UniProtKB-UniRule"/>
</dbReference>
<dbReference type="CDD" id="cd01433">
    <property type="entry name" value="Ribosomal_L16_L10e"/>
    <property type="match status" value="1"/>
</dbReference>
<dbReference type="FunFam" id="3.90.1170.10:FF:000001">
    <property type="entry name" value="50S ribosomal protein L16"/>
    <property type="match status" value="1"/>
</dbReference>
<dbReference type="Gene3D" id="3.90.1170.10">
    <property type="entry name" value="Ribosomal protein L10e/L16"/>
    <property type="match status" value="1"/>
</dbReference>
<dbReference type="HAMAP" id="MF_01342">
    <property type="entry name" value="Ribosomal_uL16"/>
    <property type="match status" value="1"/>
</dbReference>
<dbReference type="InterPro" id="IPR047873">
    <property type="entry name" value="Ribosomal_uL16"/>
</dbReference>
<dbReference type="InterPro" id="IPR000114">
    <property type="entry name" value="Ribosomal_uL16_bact-type"/>
</dbReference>
<dbReference type="InterPro" id="IPR020798">
    <property type="entry name" value="Ribosomal_uL16_CS"/>
</dbReference>
<dbReference type="InterPro" id="IPR016180">
    <property type="entry name" value="Ribosomal_uL16_dom"/>
</dbReference>
<dbReference type="InterPro" id="IPR036920">
    <property type="entry name" value="Ribosomal_uL16_sf"/>
</dbReference>
<dbReference type="NCBIfam" id="TIGR01164">
    <property type="entry name" value="rplP_bact"/>
    <property type="match status" value="1"/>
</dbReference>
<dbReference type="PANTHER" id="PTHR12220">
    <property type="entry name" value="50S/60S RIBOSOMAL PROTEIN L16"/>
    <property type="match status" value="1"/>
</dbReference>
<dbReference type="PANTHER" id="PTHR12220:SF13">
    <property type="entry name" value="LARGE RIBOSOMAL SUBUNIT PROTEIN UL16M"/>
    <property type="match status" value="1"/>
</dbReference>
<dbReference type="Pfam" id="PF00252">
    <property type="entry name" value="Ribosomal_L16"/>
    <property type="match status" value="1"/>
</dbReference>
<dbReference type="PRINTS" id="PR00060">
    <property type="entry name" value="RIBOSOMALL16"/>
</dbReference>
<dbReference type="SUPFAM" id="SSF54686">
    <property type="entry name" value="Ribosomal protein L16p/L10e"/>
    <property type="match status" value="1"/>
</dbReference>
<dbReference type="PROSITE" id="PS00586">
    <property type="entry name" value="RIBOSOMAL_L16_1"/>
    <property type="match status" value="1"/>
</dbReference>
<dbReference type="PROSITE" id="PS00701">
    <property type="entry name" value="RIBOSOMAL_L16_2"/>
    <property type="match status" value="1"/>
</dbReference>
<comment type="function">
    <text evidence="1">Binds 23S rRNA and is also seen to make contacts with the A and possibly P site tRNAs.</text>
</comment>
<comment type="subunit">
    <text>Part of the 50S ribosomal subunit.</text>
</comment>
<comment type="similarity">
    <text evidence="1">Belongs to the universal ribosomal protein uL16 family.</text>
</comment>
<feature type="chain" id="PRO_0000062218" description="Large ribosomal subunit protein uL16">
    <location>
        <begin position="1"/>
        <end position="137"/>
    </location>
</feature>
<proteinExistence type="inferred from homology"/>
<sequence length="137" mass="15436">MLVPKRVKHRREFRGKMRGEAKGGKEVAFGEYGLQATTSHWITNRQIEAARIAMTRYMKRGGKVWIKIFPHKSYTAKAIGVRMGSGKGAPEGWVAPVKRGKVMFEIAGVSEEIAREALRLASHKLPVKCKFVKREAE</sequence>
<accession>P0A476</accession>
<accession>Q9R453</accession>
<accession>Q9X5K1</accession>
<name>RL16_STRR6</name>